<dbReference type="EMBL" id="AM746676">
    <property type="protein sequence ID" value="CAN90565.1"/>
    <property type="molecule type" value="Genomic_DNA"/>
</dbReference>
<dbReference type="RefSeq" id="WP_012233043.1">
    <property type="nucleotide sequence ID" value="NC_010162.1"/>
</dbReference>
<dbReference type="SMR" id="A9GRA5"/>
<dbReference type="STRING" id="448385.sce0408"/>
<dbReference type="KEGG" id="scl:sce0408"/>
<dbReference type="eggNOG" id="COG0244">
    <property type="taxonomic scope" value="Bacteria"/>
</dbReference>
<dbReference type="HOGENOM" id="CLU_092227_1_2_7"/>
<dbReference type="OrthoDB" id="3186107at2"/>
<dbReference type="BioCyc" id="SCEL448385:SCE_RS02150-MONOMER"/>
<dbReference type="Proteomes" id="UP000002139">
    <property type="component" value="Chromosome"/>
</dbReference>
<dbReference type="GO" id="GO:0015934">
    <property type="term" value="C:large ribosomal subunit"/>
    <property type="evidence" value="ECO:0007669"/>
    <property type="project" value="InterPro"/>
</dbReference>
<dbReference type="GO" id="GO:0070180">
    <property type="term" value="F:large ribosomal subunit rRNA binding"/>
    <property type="evidence" value="ECO:0007669"/>
    <property type="project" value="UniProtKB-UniRule"/>
</dbReference>
<dbReference type="GO" id="GO:0003735">
    <property type="term" value="F:structural constituent of ribosome"/>
    <property type="evidence" value="ECO:0007669"/>
    <property type="project" value="InterPro"/>
</dbReference>
<dbReference type="GO" id="GO:0006412">
    <property type="term" value="P:translation"/>
    <property type="evidence" value="ECO:0007669"/>
    <property type="project" value="UniProtKB-UniRule"/>
</dbReference>
<dbReference type="CDD" id="cd05797">
    <property type="entry name" value="Ribosomal_L10"/>
    <property type="match status" value="1"/>
</dbReference>
<dbReference type="Gene3D" id="3.30.70.1730">
    <property type="match status" value="1"/>
</dbReference>
<dbReference type="Gene3D" id="6.10.250.290">
    <property type="match status" value="1"/>
</dbReference>
<dbReference type="HAMAP" id="MF_00362">
    <property type="entry name" value="Ribosomal_uL10"/>
    <property type="match status" value="1"/>
</dbReference>
<dbReference type="InterPro" id="IPR001790">
    <property type="entry name" value="Ribosomal_uL10"/>
</dbReference>
<dbReference type="InterPro" id="IPR043141">
    <property type="entry name" value="Ribosomal_uL10-like_sf"/>
</dbReference>
<dbReference type="InterPro" id="IPR022973">
    <property type="entry name" value="Ribosomal_uL10_bac"/>
</dbReference>
<dbReference type="InterPro" id="IPR047865">
    <property type="entry name" value="Ribosomal_uL10_bac_type"/>
</dbReference>
<dbReference type="InterPro" id="IPR002363">
    <property type="entry name" value="Ribosomal_uL10_CS_bac"/>
</dbReference>
<dbReference type="NCBIfam" id="NF000955">
    <property type="entry name" value="PRK00099.1-1"/>
    <property type="match status" value="1"/>
</dbReference>
<dbReference type="PANTHER" id="PTHR11560">
    <property type="entry name" value="39S RIBOSOMAL PROTEIN L10, MITOCHONDRIAL"/>
    <property type="match status" value="1"/>
</dbReference>
<dbReference type="Pfam" id="PF00466">
    <property type="entry name" value="Ribosomal_L10"/>
    <property type="match status" value="1"/>
</dbReference>
<dbReference type="SUPFAM" id="SSF160369">
    <property type="entry name" value="Ribosomal protein L10-like"/>
    <property type="match status" value="1"/>
</dbReference>
<dbReference type="PROSITE" id="PS01109">
    <property type="entry name" value="RIBOSOMAL_L10"/>
    <property type="match status" value="1"/>
</dbReference>
<organism>
    <name type="scientific">Sorangium cellulosum (strain So ce56)</name>
    <name type="common">Polyangium cellulosum (strain So ce56)</name>
    <dbReference type="NCBI Taxonomy" id="448385"/>
    <lineage>
        <taxon>Bacteria</taxon>
        <taxon>Pseudomonadati</taxon>
        <taxon>Myxococcota</taxon>
        <taxon>Polyangia</taxon>
        <taxon>Polyangiales</taxon>
        <taxon>Polyangiaceae</taxon>
        <taxon>Sorangium</taxon>
    </lineage>
</organism>
<feature type="chain" id="PRO_1000079564" description="Large ribosomal subunit protein uL10">
    <location>
        <begin position="1"/>
        <end position="176"/>
    </location>
</feature>
<name>RL10_SORC5</name>
<evidence type="ECO:0000255" key="1">
    <source>
        <dbReference type="HAMAP-Rule" id="MF_00362"/>
    </source>
</evidence>
<evidence type="ECO:0000305" key="2"/>
<accession>A9GRA5</accession>
<proteinExistence type="inferred from homology"/>
<gene>
    <name evidence="1" type="primary">rplJ</name>
    <name type="ordered locus">sce0408</name>
</gene>
<reference key="1">
    <citation type="journal article" date="2007" name="Nat. Biotechnol.">
        <title>Complete genome sequence of the myxobacterium Sorangium cellulosum.</title>
        <authorList>
            <person name="Schneiker S."/>
            <person name="Perlova O."/>
            <person name="Kaiser O."/>
            <person name="Gerth K."/>
            <person name="Alici A."/>
            <person name="Altmeyer M.O."/>
            <person name="Bartels D."/>
            <person name="Bekel T."/>
            <person name="Beyer S."/>
            <person name="Bode E."/>
            <person name="Bode H.B."/>
            <person name="Bolten C.J."/>
            <person name="Choudhuri J.V."/>
            <person name="Doss S."/>
            <person name="Elnakady Y.A."/>
            <person name="Frank B."/>
            <person name="Gaigalat L."/>
            <person name="Goesmann A."/>
            <person name="Groeger C."/>
            <person name="Gross F."/>
            <person name="Jelsbak L."/>
            <person name="Jelsbak L."/>
            <person name="Kalinowski J."/>
            <person name="Kegler C."/>
            <person name="Knauber T."/>
            <person name="Konietzny S."/>
            <person name="Kopp M."/>
            <person name="Krause L."/>
            <person name="Krug D."/>
            <person name="Linke B."/>
            <person name="Mahmud T."/>
            <person name="Martinez-Arias R."/>
            <person name="McHardy A.C."/>
            <person name="Merai M."/>
            <person name="Meyer F."/>
            <person name="Mormann S."/>
            <person name="Munoz-Dorado J."/>
            <person name="Perez J."/>
            <person name="Pradella S."/>
            <person name="Rachid S."/>
            <person name="Raddatz G."/>
            <person name="Rosenau F."/>
            <person name="Rueckert C."/>
            <person name="Sasse F."/>
            <person name="Scharfe M."/>
            <person name="Schuster S.C."/>
            <person name="Suen G."/>
            <person name="Treuner-Lange A."/>
            <person name="Velicer G.J."/>
            <person name="Vorholter F.-J."/>
            <person name="Weissman K.J."/>
            <person name="Welch R.D."/>
            <person name="Wenzel S.C."/>
            <person name="Whitworth D.E."/>
            <person name="Wilhelm S."/>
            <person name="Wittmann C."/>
            <person name="Bloecker H."/>
            <person name="Puehler A."/>
            <person name="Mueller R."/>
        </authorList>
    </citation>
    <scope>NUCLEOTIDE SEQUENCE [LARGE SCALE GENOMIC DNA]</scope>
    <source>
        <strain>So ce56</strain>
    </source>
</reference>
<keyword id="KW-1185">Reference proteome</keyword>
<keyword id="KW-0687">Ribonucleoprotein</keyword>
<keyword id="KW-0689">Ribosomal protein</keyword>
<keyword id="KW-0694">RNA-binding</keyword>
<keyword id="KW-0699">rRNA-binding</keyword>
<comment type="function">
    <text evidence="1">Forms part of the ribosomal stalk, playing a central role in the interaction of the ribosome with GTP-bound translation factors.</text>
</comment>
<comment type="subunit">
    <text evidence="1">Part of the ribosomal stalk of the 50S ribosomal subunit. The N-terminus interacts with L11 and the large rRNA to form the base of the stalk. The C-terminus forms an elongated spine to which L12 dimers bind in a sequential fashion forming a multimeric L10(L12)X complex.</text>
</comment>
<comment type="similarity">
    <text evidence="1">Belongs to the universal ribosomal protein uL10 family.</text>
</comment>
<sequence>MERSQKEVLIGSVRQKFERMSSAVFLDFKGMNVEAVTKLRDEFRKSGVEYRVVKNTLVRHAIKEHPWAKTLSKSLTGMTGVAWSYEDPSAAAKVVKAFRKDNQKLQIKAGLIEGQILSGDAVETQLATMPGKDELRATLLATLQAPLQQFVQQLNAPLQNFAYLLKAKEEEAGKQA</sequence>
<protein>
    <recommendedName>
        <fullName evidence="1">Large ribosomal subunit protein uL10</fullName>
    </recommendedName>
    <alternativeName>
        <fullName evidence="2">50S ribosomal protein L10</fullName>
    </alternativeName>
</protein>